<proteinExistence type="inferred from homology"/>
<name>YEJB_ECO57</name>
<evidence type="ECO:0000250" key="1"/>
<evidence type="ECO:0000255" key="2"/>
<evidence type="ECO:0000255" key="3">
    <source>
        <dbReference type="PROSITE-ProRule" id="PRU00441"/>
    </source>
</evidence>
<evidence type="ECO:0000305" key="4"/>
<protein>
    <recommendedName>
        <fullName>Inner membrane ABC transporter permease protein YejB</fullName>
    </recommendedName>
</protein>
<accession>P0AFU1</accession>
<accession>P33914</accession>
<accession>P76448</accession>
<sequence length="364" mass="40360">MGAYLIRRLLLVIPTLWAIITINFFIVQIAPGGPVDQAIAAIEFGNAGVLPGAGGEGVRASHAQTGVGNISDSNYRGGRGLDPEVIAEITHRYGFDKPIHERYFKMLWDYIRFDFGDSLFRSASVLTLIKDSLPVSITLGLWSTLIIYLVSIPLGIRKAVYNGSRFDVWSSAFIIIGYAIPAFLFAILLIVFFAGGSYFDLFPLRGLVSANFDSLPWYQKITDYLWHITLPVLATVIGGFAALTMLTKNSFLDEVRKQYVVTARAKGVSEKNILWKHVFRNAMLLVIAGFPATFISMFFTGSLLIEVMFSLNGLGLLGYEATVSRDYPVMFGTLYIFTLIGLLLNIVSDISYTLVDPRIDFEGR</sequence>
<feature type="chain" id="PRO_0000060258" description="Inner membrane ABC transporter permease protein YejB">
    <location>
        <begin position="1"/>
        <end position="364"/>
    </location>
</feature>
<feature type="topological domain" description="Periplasmic" evidence="2">
    <location>
        <begin position="1"/>
        <end position="8"/>
    </location>
</feature>
<feature type="transmembrane region" description="Helical" evidence="3">
    <location>
        <begin position="9"/>
        <end position="29"/>
    </location>
</feature>
<feature type="topological domain" description="Cytoplasmic" evidence="2">
    <location>
        <begin position="30"/>
        <end position="37"/>
    </location>
</feature>
<feature type="transmembrane region" description="Helical" evidence="3">
    <location>
        <begin position="38"/>
        <end position="58"/>
    </location>
</feature>
<feature type="topological domain" description="Periplasmic" evidence="2">
    <location>
        <begin position="59"/>
        <end position="135"/>
    </location>
</feature>
<feature type="transmembrane region" description="Helical" evidence="3">
    <location>
        <begin position="136"/>
        <end position="156"/>
    </location>
</feature>
<feature type="topological domain" description="Cytoplasmic" evidence="2">
    <location>
        <begin position="157"/>
        <end position="172"/>
    </location>
</feature>
<feature type="transmembrane region" description="Helical" evidence="3">
    <location>
        <begin position="173"/>
        <end position="193"/>
    </location>
</feature>
<feature type="topological domain" description="Periplasmic" evidence="2">
    <location>
        <begin position="194"/>
        <end position="224"/>
    </location>
</feature>
<feature type="transmembrane region" description="Helical" evidence="3">
    <location>
        <begin position="225"/>
        <end position="245"/>
    </location>
</feature>
<feature type="topological domain" description="Cytoplasmic" evidence="2">
    <location>
        <begin position="246"/>
        <end position="284"/>
    </location>
</feature>
<feature type="transmembrane region" description="Helical" evidence="3">
    <location>
        <begin position="285"/>
        <end position="305"/>
    </location>
</feature>
<feature type="topological domain" description="Periplasmic" evidence="2">
    <location>
        <begin position="306"/>
        <end position="326"/>
    </location>
</feature>
<feature type="transmembrane region" description="Helical" evidence="3">
    <location>
        <begin position="327"/>
        <end position="347"/>
    </location>
</feature>
<feature type="topological domain" description="Cytoplasmic" evidence="2">
    <location>
        <begin position="348"/>
        <end position="364"/>
    </location>
</feature>
<feature type="domain" description="ABC transmembrane type-1" evidence="3">
    <location>
        <begin position="133"/>
        <end position="348"/>
    </location>
</feature>
<dbReference type="EMBL" id="AE005174">
    <property type="protein sequence ID" value="AAG57316.1"/>
    <property type="molecule type" value="Genomic_DNA"/>
</dbReference>
<dbReference type="EMBL" id="BA000007">
    <property type="protein sequence ID" value="BAB36493.1"/>
    <property type="molecule type" value="Genomic_DNA"/>
</dbReference>
<dbReference type="PIR" id="F91012">
    <property type="entry name" value="F91012"/>
</dbReference>
<dbReference type="RefSeq" id="NP_311097.1">
    <property type="nucleotide sequence ID" value="NC_002695.1"/>
</dbReference>
<dbReference type="RefSeq" id="WP_000501604.1">
    <property type="nucleotide sequence ID" value="NZ_VOAI01000001.1"/>
</dbReference>
<dbReference type="SMR" id="P0AFU1"/>
<dbReference type="STRING" id="155864.Z3437"/>
<dbReference type="TCDB" id="3.A.1.5.21">
    <property type="family name" value="the atp-binding cassette (abc) superfamily"/>
</dbReference>
<dbReference type="GeneID" id="916774"/>
<dbReference type="KEGG" id="ece:Z3437"/>
<dbReference type="KEGG" id="ecs:ECs_3070"/>
<dbReference type="PATRIC" id="fig|386585.9.peg.3202"/>
<dbReference type="eggNOG" id="COG4174">
    <property type="taxonomic scope" value="Bacteria"/>
</dbReference>
<dbReference type="HOGENOM" id="CLU_036879_1_1_6"/>
<dbReference type="OMA" id="VTDYLWH"/>
<dbReference type="Proteomes" id="UP000000558">
    <property type="component" value="Chromosome"/>
</dbReference>
<dbReference type="Proteomes" id="UP000002519">
    <property type="component" value="Chromosome"/>
</dbReference>
<dbReference type="GO" id="GO:0005886">
    <property type="term" value="C:plasma membrane"/>
    <property type="evidence" value="ECO:0007669"/>
    <property type="project" value="UniProtKB-SubCell"/>
</dbReference>
<dbReference type="GO" id="GO:0042884">
    <property type="term" value="P:microcin transport"/>
    <property type="evidence" value="ECO:0007669"/>
    <property type="project" value="TreeGrafter"/>
</dbReference>
<dbReference type="GO" id="GO:0055085">
    <property type="term" value="P:transmembrane transport"/>
    <property type="evidence" value="ECO:0007669"/>
    <property type="project" value="InterPro"/>
</dbReference>
<dbReference type="CDD" id="cd06261">
    <property type="entry name" value="TM_PBP2"/>
    <property type="match status" value="1"/>
</dbReference>
<dbReference type="FunFam" id="1.10.3720.10:FF:000014">
    <property type="entry name" value="Microcin C ABC transporter permease YejB"/>
    <property type="match status" value="1"/>
</dbReference>
<dbReference type="Gene3D" id="1.10.3720.10">
    <property type="entry name" value="MetI-like"/>
    <property type="match status" value="1"/>
</dbReference>
<dbReference type="InterPro" id="IPR000515">
    <property type="entry name" value="MetI-like"/>
</dbReference>
<dbReference type="InterPro" id="IPR035906">
    <property type="entry name" value="MetI-like_sf"/>
</dbReference>
<dbReference type="NCBIfam" id="NF011712">
    <property type="entry name" value="PRK15133.1"/>
    <property type="match status" value="1"/>
</dbReference>
<dbReference type="PANTHER" id="PTHR30465">
    <property type="entry name" value="INNER MEMBRANE ABC TRANSPORTER"/>
    <property type="match status" value="1"/>
</dbReference>
<dbReference type="PANTHER" id="PTHR30465:SF66">
    <property type="entry name" value="INNER MEMBRANE ABC TRANSPORTER PERMEASE PROTEIN YEJB"/>
    <property type="match status" value="1"/>
</dbReference>
<dbReference type="Pfam" id="PF00528">
    <property type="entry name" value="BPD_transp_1"/>
    <property type="match status" value="1"/>
</dbReference>
<dbReference type="SUPFAM" id="SSF161098">
    <property type="entry name" value="MetI-like"/>
    <property type="match status" value="1"/>
</dbReference>
<dbReference type="PROSITE" id="PS50928">
    <property type="entry name" value="ABC_TM1"/>
    <property type="match status" value="1"/>
</dbReference>
<comment type="function">
    <text evidence="1">Probably part of a binding-protein-dependent transport system. Probably responsible for the translocation of the substrate across the membrane (By similarity).</text>
</comment>
<comment type="subcellular location">
    <subcellularLocation>
        <location evidence="1">Cell inner membrane</location>
        <topology evidence="3">Multi-pass membrane protein</topology>
    </subcellularLocation>
</comment>
<comment type="similarity">
    <text evidence="4">Belongs to the binding-protein-dependent transport system permease family. OppBC subfamily.</text>
</comment>
<gene>
    <name type="primary">yejB</name>
    <name type="ordered locus">Z3437</name>
    <name type="ordered locus">ECs3070</name>
</gene>
<organism>
    <name type="scientific">Escherichia coli O157:H7</name>
    <dbReference type="NCBI Taxonomy" id="83334"/>
    <lineage>
        <taxon>Bacteria</taxon>
        <taxon>Pseudomonadati</taxon>
        <taxon>Pseudomonadota</taxon>
        <taxon>Gammaproteobacteria</taxon>
        <taxon>Enterobacterales</taxon>
        <taxon>Enterobacteriaceae</taxon>
        <taxon>Escherichia</taxon>
    </lineage>
</organism>
<keyword id="KW-0997">Cell inner membrane</keyword>
<keyword id="KW-1003">Cell membrane</keyword>
<keyword id="KW-0472">Membrane</keyword>
<keyword id="KW-1185">Reference proteome</keyword>
<keyword id="KW-0812">Transmembrane</keyword>
<keyword id="KW-1133">Transmembrane helix</keyword>
<keyword id="KW-0813">Transport</keyword>
<reference key="1">
    <citation type="journal article" date="2001" name="Nature">
        <title>Genome sequence of enterohaemorrhagic Escherichia coli O157:H7.</title>
        <authorList>
            <person name="Perna N.T."/>
            <person name="Plunkett G. III"/>
            <person name="Burland V."/>
            <person name="Mau B."/>
            <person name="Glasner J.D."/>
            <person name="Rose D.J."/>
            <person name="Mayhew G.F."/>
            <person name="Evans P.S."/>
            <person name="Gregor J."/>
            <person name="Kirkpatrick H.A."/>
            <person name="Posfai G."/>
            <person name="Hackett J."/>
            <person name="Klink S."/>
            <person name="Boutin A."/>
            <person name="Shao Y."/>
            <person name="Miller L."/>
            <person name="Grotbeck E.J."/>
            <person name="Davis N.W."/>
            <person name="Lim A."/>
            <person name="Dimalanta E.T."/>
            <person name="Potamousis K."/>
            <person name="Apodaca J."/>
            <person name="Anantharaman T.S."/>
            <person name="Lin J."/>
            <person name="Yen G."/>
            <person name="Schwartz D.C."/>
            <person name="Welch R.A."/>
            <person name="Blattner F.R."/>
        </authorList>
    </citation>
    <scope>NUCLEOTIDE SEQUENCE [LARGE SCALE GENOMIC DNA]</scope>
    <source>
        <strain>O157:H7 / EDL933 / ATCC 700927 / EHEC</strain>
    </source>
</reference>
<reference key="2">
    <citation type="journal article" date="2001" name="DNA Res.">
        <title>Complete genome sequence of enterohemorrhagic Escherichia coli O157:H7 and genomic comparison with a laboratory strain K-12.</title>
        <authorList>
            <person name="Hayashi T."/>
            <person name="Makino K."/>
            <person name="Ohnishi M."/>
            <person name="Kurokawa K."/>
            <person name="Ishii K."/>
            <person name="Yokoyama K."/>
            <person name="Han C.-G."/>
            <person name="Ohtsubo E."/>
            <person name="Nakayama K."/>
            <person name="Murata T."/>
            <person name="Tanaka M."/>
            <person name="Tobe T."/>
            <person name="Iida T."/>
            <person name="Takami H."/>
            <person name="Honda T."/>
            <person name="Sasakawa C."/>
            <person name="Ogasawara N."/>
            <person name="Yasunaga T."/>
            <person name="Kuhara S."/>
            <person name="Shiba T."/>
            <person name="Hattori M."/>
            <person name="Shinagawa H."/>
        </authorList>
    </citation>
    <scope>NUCLEOTIDE SEQUENCE [LARGE SCALE GENOMIC DNA]</scope>
    <source>
        <strain>O157:H7 / Sakai / RIMD 0509952 / EHEC</strain>
    </source>
</reference>